<keyword id="KW-0002">3D-structure</keyword>
<keyword id="KW-0007">Acetylation</keyword>
<keyword id="KW-0067">ATP-binding</keyword>
<keyword id="KW-0347">Helicase</keyword>
<keyword id="KW-0378">Hydrolase</keyword>
<keyword id="KW-0507">mRNA processing</keyword>
<keyword id="KW-0508">mRNA splicing</keyword>
<keyword id="KW-0509">mRNA transport</keyword>
<keyword id="KW-0547">Nucleotide-binding</keyword>
<keyword id="KW-0539">Nucleus</keyword>
<keyword id="KW-0597">Phosphoprotein</keyword>
<keyword id="KW-1185">Reference proteome</keyword>
<keyword id="KW-0694">RNA-binding</keyword>
<keyword id="KW-0747">Spliceosome</keyword>
<keyword id="KW-0813">Transport</keyword>
<protein>
    <recommendedName>
        <fullName>ATP-dependent RNA helicase SUB2</fullName>
        <ecNumber>3.6.4.13</ecNumber>
    </recommendedName>
    <alternativeName>
        <fullName>Suppressor of BRR1 protein 2</fullName>
    </alternativeName>
</protein>
<gene>
    <name type="primary">SUB2</name>
    <name type="ordered locus">YDL084W</name>
</gene>
<reference key="1">
    <citation type="journal article" date="1997" name="Nature">
        <title>The nucleotide sequence of Saccharomyces cerevisiae chromosome IV.</title>
        <authorList>
            <person name="Jacq C."/>
            <person name="Alt-Moerbe J."/>
            <person name="Andre B."/>
            <person name="Arnold W."/>
            <person name="Bahr A."/>
            <person name="Ballesta J.P.G."/>
            <person name="Bargues M."/>
            <person name="Baron L."/>
            <person name="Becker A."/>
            <person name="Biteau N."/>
            <person name="Bloecker H."/>
            <person name="Blugeon C."/>
            <person name="Boskovic J."/>
            <person name="Brandt P."/>
            <person name="Brueckner M."/>
            <person name="Buitrago M.J."/>
            <person name="Coster F."/>
            <person name="Delaveau T."/>
            <person name="del Rey F."/>
            <person name="Dujon B."/>
            <person name="Eide L.G."/>
            <person name="Garcia-Cantalejo J.M."/>
            <person name="Goffeau A."/>
            <person name="Gomez-Peris A."/>
            <person name="Granotier C."/>
            <person name="Hanemann V."/>
            <person name="Hankeln T."/>
            <person name="Hoheisel J.D."/>
            <person name="Jaeger W."/>
            <person name="Jimenez A."/>
            <person name="Jonniaux J.-L."/>
            <person name="Kraemer C."/>
            <person name="Kuester H."/>
            <person name="Laamanen P."/>
            <person name="Legros Y."/>
            <person name="Louis E.J."/>
            <person name="Moeller-Rieker S."/>
            <person name="Monnet A."/>
            <person name="Moro M."/>
            <person name="Mueller-Auer S."/>
            <person name="Nussbaumer B."/>
            <person name="Paricio N."/>
            <person name="Paulin L."/>
            <person name="Perea J."/>
            <person name="Perez-Alonso M."/>
            <person name="Perez-Ortin J.E."/>
            <person name="Pohl T.M."/>
            <person name="Prydz H."/>
            <person name="Purnelle B."/>
            <person name="Rasmussen S.W."/>
            <person name="Remacha M.A."/>
            <person name="Revuelta J.L."/>
            <person name="Rieger M."/>
            <person name="Salom D."/>
            <person name="Saluz H.P."/>
            <person name="Saiz J.E."/>
            <person name="Saren A.-M."/>
            <person name="Schaefer M."/>
            <person name="Scharfe M."/>
            <person name="Schmidt E.R."/>
            <person name="Schneider C."/>
            <person name="Scholler P."/>
            <person name="Schwarz S."/>
            <person name="Soler-Mira A."/>
            <person name="Urrestarazu L.A."/>
            <person name="Verhasselt P."/>
            <person name="Vissers S."/>
            <person name="Voet M."/>
            <person name="Volckaert G."/>
            <person name="Wagner G."/>
            <person name="Wambutt R."/>
            <person name="Wedler E."/>
            <person name="Wedler H."/>
            <person name="Woelfl S."/>
            <person name="Harris D.E."/>
            <person name="Bowman S."/>
            <person name="Brown D."/>
            <person name="Churcher C.M."/>
            <person name="Connor R."/>
            <person name="Dedman K."/>
            <person name="Gentles S."/>
            <person name="Hamlin N."/>
            <person name="Hunt S."/>
            <person name="Jones L."/>
            <person name="McDonald S."/>
            <person name="Murphy L.D."/>
            <person name="Niblett D."/>
            <person name="Odell C."/>
            <person name="Oliver K."/>
            <person name="Rajandream M.A."/>
            <person name="Richards C."/>
            <person name="Shore L."/>
            <person name="Walsh S.V."/>
            <person name="Barrell B.G."/>
            <person name="Dietrich F.S."/>
            <person name="Mulligan J.T."/>
            <person name="Allen E."/>
            <person name="Araujo R."/>
            <person name="Aviles E."/>
            <person name="Berno A."/>
            <person name="Carpenter J."/>
            <person name="Chen E."/>
            <person name="Cherry J.M."/>
            <person name="Chung E."/>
            <person name="Duncan M."/>
            <person name="Hunicke-Smith S."/>
            <person name="Hyman R.W."/>
            <person name="Komp C."/>
            <person name="Lashkari D."/>
            <person name="Lew H."/>
            <person name="Lin D."/>
            <person name="Mosedale D."/>
            <person name="Nakahara K."/>
            <person name="Namath A."/>
            <person name="Oefner P."/>
            <person name="Oh C."/>
            <person name="Petel F.X."/>
            <person name="Roberts D."/>
            <person name="Schramm S."/>
            <person name="Schroeder M."/>
            <person name="Shogren T."/>
            <person name="Shroff N."/>
            <person name="Winant A."/>
            <person name="Yelton M.A."/>
            <person name="Botstein D."/>
            <person name="Davis R.W."/>
            <person name="Johnston M."/>
            <person name="Andrews S."/>
            <person name="Brinkman R."/>
            <person name="Cooper J."/>
            <person name="Ding H."/>
            <person name="Du Z."/>
            <person name="Favello A."/>
            <person name="Fulton L."/>
            <person name="Gattung S."/>
            <person name="Greco T."/>
            <person name="Hallsworth K."/>
            <person name="Hawkins J."/>
            <person name="Hillier L.W."/>
            <person name="Jier M."/>
            <person name="Johnson D."/>
            <person name="Johnston L."/>
            <person name="Kirsten J."/>
            <person name="Kucaba T."/>
            <person name="Langston Y."/>
            <person name="Latreille P."/>
            <person name="Le T."/>
            <person name="Mardis E."/>
            <person name="Menezes S."/>
            <person name="Miller N."/>
            <person name="Nhan M."/>
            <person name="Pauley A."/>
            <person name="Peluso D."/>
            <person name="Rifkin L."/>
            <person name="Riles L."/>
            <person name="Taich A."/>
            <person name="Trevaskis E."/>
            <person name="Vignati D."/>
            <person name="Wilcox L."/>
            <person name="Wohldman P."/>
            <person name="Vaudin M."/>
            <person name="Wilson R."/>
            <person name="Waterston R."/>
            <person name="Albermann K."/>
            <person name="Hani J."/>
            <person name="Heumann K."/>
            <person name="Kleine K."/>
            <person name="Mewes H.-W."/>
            <person name="Zollner A."/>
            <person name="Zaccaria P."/>
        </authorList>
    </citation>
    <scope>NUCLEOTIDE SEQUENCE [LARGE SCALE GENOMIC DNA]</scope>
    <source>
        <strain>ATCC 204508 / S288c</strain>
    </source>
</reference>
<reference key="2">
    <citation type="journal article" date="2014" name="G3 (Bethesda)">
        <title>The reference genome sequence of Saccharomyces cerevisiae: Then and now.</title>
        <authorList>
            <person name="Engel S.R."/>
            <person name="Dietrich F.S."/>
            <person name="Fisk D.G."/>
            <person name="Binkley G."/>
            <person name="Balakrishnan R."/>
            <person name="Costanzo M.C."/>
            <person name="Dwight S.S."/>
            <person name="Hitz B.C."/>
            <person name="Karra K."/>
            <person name="Nash R.S."/>
            <person name="Weng S."/>
            <person name="Wong E.D."/>
            <person name="Lloyd P."/>
            <person name="Skrzypek M.S."/>
            <person name="Miyasato S.R."/>
            <person name="Simison M."/>
            <person name="Cherry J.M."/>
        </authorList>
    </citation>
    <scope>GENOME REANNOTATION</scope>
    <source>
        <strain>ATCC 204508 / S288c</strain>
    </source>
</reference>
<reference key="3">
    <citation type="journal article" date="2007" name="Genome Res.">
        <title>Approaching a complete repository of sequence-verified protein-encoding clones for Saccharomyces cerevisiae.</title>
        <authorList>
            <person name="Hu Y."/>
            <person name="Rolfs A."/>
            <person name="Bhullar B."/>
            <person name="Murthy T.V.S."/>
            <person name="Zhu C."/>
            <person name="Berger M.F."/>
            <person name="Camargo A.A."/>
            <person name="Kelley F."/>
            <person name="McCarron S."/>
            <person name="Jepson D."/>
            <person name="Richardson A."/>
            <person name="Raphael J."/>
            <person name="Moreira D."/>
            <person name="Taycher E."/>
            <person name="Zuo D."/>
            <person name="Mohr S."/>
            <person name="Kane M.F."/>
            <person name="Williamson J."/>
            <person name="Simpson A.J.G."/>
            <person name="Bulyk M.L."/>
            <person name="Harlow E."/>
            <person name="Marsischky G."/>
            <person name="Kolodner R.D."/>
            <person name="LaBaer J."/>
        </authorList>
    </citation>
    <scope>NUCLEOTIDE SEQUENCE [GENOMIC DNA]</scope>
    <source>
        <strain>ATCC 204508 / S288c</strain>
    </source>
</reference>
<reference key="4">
    <citation type="journal article" date="1999" name="Yeast">
        <title>Systematic identification, classification, and characterization of the open reading frames which encode novel helicase-related proteins in Saccharomyces cerevisiae by gene disruption and Northern analysis.</title>
        <authorList>
            <person name="Shiratori A."/>
            <person name="Shibata T."/>
            <person name="Arisawa M."/>
            <person name="Hanaoka F."/>
            <person name="Murakami Y."/>
            <person name="Eki T."/>
        </authorList>
    </citation>
    <scope>FUNCTION</scope>
</reference>
<reference key="5">
    <citation type="journal article" date="2001" name="Curr. Biol.">
        <title>The DECD box putative ATPase Sub2p is an early mRNA export factor.</title>
        <authorList>
            <person name="Jensen T.H."/>
            <person name="Boulay J."/>
            <person name="Rosbash M."/>
            <person name="Libri D."/>
        </authorList>
    </citation>
    <scope>FUNCTION</scope>
</reference>
<reference key="6">
    <citation type="journal article" date="2004" name="Curr. Biol.">
        <authorList>
            <person name="Jensen T.H."/>
            <person name="Boulay J."/>
            <person name="Rosbash M."/>
            <person name="Libri D."/>
        </authorList>
    </citation>
    <scope>ERRATUM OF PUBMED:11696331</scope>
</reference>
<reference key="7">
    <citation type="journal article" date="2001" name="Genes Dev.">
        <title>Identification and characterization of yUAP/Sub2p, a yeast homolog of the essential human pre-mRNA splicing factor hUAP56.</title>
        <authorList>
            <person name="Zhang M."/>
            <person name="Green M.R."/>
        </authorList>
    </citation>
    <scope>FUNCTION</scope>
    <scope>MUTAGENESIS OF LYS-112; ASP-174; ASP-215; CYS-217 AND SER-247</scope>
</reference>
<reference key="8">
    <citation type="journal article" date="2001" name="Genes Dev.">
        <title>Multiple roles for the yeast SUB2/yUAP56 gene in splicing.</title>
        <authorList>
            <person name="Libri D."/>
            <person name="Graziani N."/>
            <person name="Saguez C."/>
            <person name="Boulay J."/>
        </authorList>
    </citation>
    <scope>FUNCTION</scope>
    <scope>MUTAGENESIS OF ASP-8; GLN-122; VAL-135; LYS-173 AND LYS-403</scope>
</reference>
<reference key="9">
    <citation type="journal article" date="2001" name="Genes Dev.">
        <title>Deletion of MUD2, the yeast homolog of U2AF65, can bypass the requirement for sub2, an essential spliceosomal ATPase.</title>
        <authorList>
            <person name="Kistler A.L."/>
            <person name="Guthrie C."/>
        </authorList>
    </citation>
    <scope>FUNCTION</scope>
    <scope>MUTAGENESIS OF ASP-22; GLU-83; LEU-142; ILE-146 AND GLN-308</scope>
</reference>
<reference key="10">
    <citation type="journal article" date="2001" name="Mol. Cell. Biol.">
        <title>High-copy-number expression of Sub2p, a member of the RNA helicase superfamily, suppresses hpr1-mediated genomic instability.</title>
        <authorList>
            <person name="Fan H.-Y."/>
            <person name="Merker R.J."/>
            <person name="Klein H.L."/>
        </authorList>
    </citation>
    <scope>FUNCTION</scope>
</reference>
<reference key="11">
    <citation type="journal article" date="2001" name="Nature">
        <title>Splicing factor Sub2p is required for nuclear mRNA export through its interaction with Yra1p.</title>
        <authorList>
            <person name="Straesser K."/>
            <person name="Hurt E."/>
        </authorList>
    </citation>
    <scope>FUNCTION</scope>
    <scope>INTERACTION WITH YRA1</scope>
</reference>
<reference key="12">
    <citation type="journal article" date="2002" name="EMBO J.">
        <title>The yeast THO complex and mRNA export factors link RNA metabolism with transcription and genome instability.</title>
        <authorList>
            <person name="Jimeno S."/>
            <person name="Rondon A.G."/>
            <person name="Luna R."/>
            <person name="Aguilera A."/>
        </authorList>
    </citation>
    <scope>FUNCTION</scope>
</reference>
<reference key="13">
    <citation type="journal article" date="2002" name="EMBO J.">
        <title>The mRNA export machinery requires the novel Sac3p-Thp1p complex to dock at the nucleoplasmic entrance of the nuclear pores.</title>
        <authorList>
            <person name="Fischer T."/>
            <person name="Straesser K."/>
            <person name="Racz A."/>
            <person name="Rodriguez-Navarro S."/>
            <person name="Oppizzi M."/>
            <person name="Ihrig P."/>
            <person name="Lechner J."/>
            <person name="Hurt E."/>
        </authorList>
    </citation>
    <scope>INTERACTION WITH SAC3</scope>
</reference>
<reference key="14">
    <citation type="journal article" date="2002" name="Gene">
        <title>DEAD-box RNA helicase Sub2 is required for expression of lacZ fusions in Saccharomyces cerevisiae and is a dosage-dependent suppressor of RLR1 (THO2).</title>
        <authorList>
            <person name="West R.W. Jr."/>
            <person name="Milgrom E."/>
        </authorList>
    </citation>
    <scope>FUNCTION</scope>
</reference>
<reference key="15">
    <citation type="journal article" date="2002" name="Mol. Cell. Biol.">
        <title>Stable mRNP formation and export require cotranscriptional recruitment of the mRNA export factors Yra1p and Sub2p by Hpr1p.</title>
        <authorList>
            <person name="Zenklusen D."/>
            <person name="Vinciguerra P."/>
            <person name="Wyss J.-C."/>
            <person name="Stutz F."/>
        </authorList>
    </citation>
    <scope>FUNCTION</scope>
    <scope>INTERACTION WITH HPR1; YRA1 AND YRA2</scope>
    <scope>ASSOCIATION WITH MRNP COMPLEXES</scope>
</reference>
<reference key="16">
    <citation type="journal article" date="2002" name="Nature">
        <title>TREX is a conserved complex coupling transcription with messenger RNA export.</title>
        <authorList>
            <person name="Straesser K."/>
            <person name="Masuda S."/>
            <person name="Mason P."/>
            <person name="Pfannstiel J."/>
            <person name="Oppizzi M."/>
            <person name="Rodriguez-Navarro S."/>
            <person name="Rondon A.G."/>
            <person name="Aguilera A."/>
            <person name="Struhl K."/>
            <person name="Reed R."/>
            <person name="Hurt E."/>
        </authorList>
    </citation>
    <scope>FUNCTION</scope>
    <scope>IDENTIFICATION IN THE TREX COMPLEX</scope>
    <scope>IDENTIFICATION BY MASS SPECTROMETRY</scope>
</reference>
<reference key="17">
    <citation type="journal article" date="2003" name="J. Biol. Chem.">
        <title>Molecular evidence that the eukaryotic THO/TREX complex is required for efficient transcription elongation.</title>
        <authorList>
            <person name="Rondon A.G."/>
            <person name="Jimeno S."/>
            <person name="Garcia-Rubio M."/>
            <person name="Aguilera A."/>
        </authorList>
    </citation>
    <scope>FUNCTION</scope>
</reference>
<reference key="18">
    <citation type="journal article" date="2003" name="Nature">
        <title>Global analysis of protein localization in budding yeast.</title>
        <authorList>
            <person name="Huh W.-K."/>
            <person name="Falvo J.V."/>
            <person name="Gerke L.C."/>
            <person name="Carroll A.S."/>
            <person name="Howson R.W."/>
            <person name="Weissman J.S."/>
            <person name="O'Shea E.K."/>
        </authorList>
    </citation>
    <scope>SUBCELLULAR LOCATION [LARGE SCALE ANALYSIS]</scope>
</reference>
<reference key="19">
    <citation type="journal article" date="2003" name="Nature">
        <title>Global analysis of protein expression in yeast.</title>
        <authorList>
            <person name="Ghaemmaghami S."/>
            <person name="Huh W.-K."/>
            <person name="Bower K."/>
            <person name="Howson R.W."/>
            <person name="Belle A."/>
            <person name="Dephoure N."/>
            <person name="O'Shea E.K."/>
            <person name="Weissman J.S."/>
        </authorList>
    </citation>
    <scope>LEVEL OF PROTEIN EXPRESSION [LARGE SCALE ANALYSIS]</scope>
</reference>
<reference key="20">
    <citation type="journal article" date="2005" name="Mol. Cell. Proteomics">
        <title>Quantitative phosphoproteomics applied to the yeast pheromone signaling pathway.</title>
        <authorList>
            <person name="Gruhler A."/>
            <person name="Olsen J.V."/>
            <person name="Mohammed S."/>
            <person name="Mortensen P."/>
            <person name="Faergeman N.J."/>
            <person name="Mann M."/>
            <person name="Jensen O.N."/>
        </authorList>
    </citation>
    <scope>ACETYLATION [LARGE SCALE ANALYSIS] AT SER-2</scope>
    <scope>CLEAVAGE OF INITIATOR METHIONINE [LARGE SCALE ANALYSIS]</scope>
    <scope>IDENTIFICATION BY MASS SPECTROMETRY [LARGE SCALE ANALYSIS]</scope>
    <source>
        <strain>YAL6B</strain>
    </source>
</reference>
<reference key="21">
    <citation type="journal article" date="2005" name="Yeast">
        <title>The Saccharomyces cerevisiae Sub2 protein suppresses heterochromatic silencing at telomeres and subtelomeric genes.</title>
        <authorList>
            <person name="Lahue E."/>
            <person name="Heckathorn J."/>
            <person name="Meyer Z."/>
            <person name="Smith J."/>
            <person name="Wolfe C."/>
        </authorList>
    </citation>
    <scope>FUNCTION</scope>
</reference>
<reference key="22">
    <citation type="journal article" date="2007" name="J. Proteome Res.">
        <title>Large-scale phosphorylation analysis of alpha-factor-arrested Saccharomyces cerevisiae.</title>
        <authorList>
            <person name="Li X."/>
            <person name="Gerber S.A."/>
            <person name="Rudner A.D."/>
            <person name="Beausoleil S.A."/>
            <person name="Haas W."/>
            <person name="Villen J."/>
            <person name="Elias J.E."/>
            <person name="Gygi S.P."/>
        </authorList>
    </citation>
    <scope>PHOSPHORYLATION [LARGE SCALE ANALYSIS] AT SER-13</scope>
    <scope>IDENTIFICATION BY MASS SPECTROMETRY [LARGE SCALE ANALYSIS]</scope>
    <source>
        <strain>ADR376</strain>
    </source>
</reference>
<reference key="23">
    <citation type="journal article" date="2007" name="Proc. Natl. Acad. Sci. U.S.A.">
        <title>Analysis of phosphorylation sites on proteins from Saccharomyces cerevisiae by electron transfer dissociation (ETD) mass spectrometry.</title>
        <authorList>
            <person name="Chi A."/>
            <person name="Huttenhower C."/>
            <person name="Geer L.Y."/>
            <person name="Coon J.J."/>
            <person name="Syka J.E.P."/>
            <person name="Bai D.L."/>
            <person name="Shabanowitz J."/>
            <person name="Burke D.J."/>
            <person name="Troyanskaya O.G."/>
            <person name="Hunt D.F."/>
        </authorList>
    </citation>
    <scope>IDENTIFICATION BY MASS SPECTROMETRY [LARGE SCALE ANALYSIS]</scope>
</reference>
<reference key="24">
    <citation type="journal article" date="2008" name="Mol. Cell. Proteomics">
        <title>A multidimensional chromatography technology for in-depth phosphoproteome analysis.</title>
        <authorList>
            <person name="Albuquerque C.P."/>
            <person name="Smolka M.B."/>
            <person name="Payne S.H."/>
            <person name="Bafna V."/>
            <person name="Eng J."/>
            <person name="Zhou H."/>
        </authorList>
    </citation>
    <scope>PHOSPHORYLATION [LARGE SCALE ANALYSIS] AT THR-169</scope>
    <scope>IDENTIFICATION BY MASS SPECTROMETRY [LARGE SCALE ANALYSIS]</scope>
</reference>
<reference key="25">
    <citation type="journal article" date="2009" name="Science">
        <title>Global analysis of Cdk1 substrate phosphorylation sites provides insights into evolution.</title>
        <authorList>
            <person name="Holt L.J."/>
            <person name="Tuch B.B."/>
            <person name="Villen J."/>
            <person name="Johnson A.D."/>
            <person name="Gygi S.P."/>
            <person name="Morgan D.O."/>
        </authorList>
    </citation>
    <scope>PHOSPHORYLATION [LARGE SCALE ANALYSIS] AT SER-37</scope>
    <scope>IDENTIFICATION BY MASS SPECTROMETRY [LARGE SCALE ANALYSIS]</scope>
</reference>
<reference key="26">
    <citation type="journal article" date="2012" name="Proteomics">
        <title>Sites of ubiquitin attachment in Saccharomyces cerevisiae.</title>
        <authorList>
            <person name="Starita L.M."/>
            <person name="Lo R.S."/>
            <person name="Eng J.K."/>
            <person name="von Haller P.D."/>
            <person name="Fields S."/>
        </authorList>
    </citation>
    <scope>IDENTIFICATION BY MASS SPECTROMETRY [LARGE SCALE ANALYSIS]</scope>
</reference>
<reference key="27">
    <citation type="journal article" date="2023" name="Cell Rep.">
        <title>Structural basis for high-order complex of SARNP and DDX39B to facilitate mRNP assembly.</title>
        <authorList>
            <person name="Xie Y."/>
            <person name="Gao S."/>
            <person name="Zhang K."/>
            <person name="Bhat P."/>
            <person name="Clarke B.P."/>
            <person name="Batten K."/>
            <person name="Mei M."/>
            <person name="Gazzara M."/>
            <person name="Shay J.W."/>
            <person name="Lynch K.W."/>
            <person name="Angelos A.E."/>
            <person name="Hill P.S."/>
            <person name="Ivey A.L."/>
            <person name="Fontoura B.M.A."/>
            <person name="Ren Y."/>
        </authorList>
    </citation>
    <scope>FUNCTION</scope>
    <scope>INTERACTION WITH THO1</scope>
</reference>
<proteinExistence type="evidence at protein level"/>
<evidence type="ECO:0000255" key="1">
    <source>
        <dbReference type="PROSITE-ProRule" id="PRU00541"/>
    </source>
</evidence>
<evidence type="ECO:0000255" key="2">
    <source>
        <dbReference type="PROSITE-ProRule" id="PRU00542"/>
    </source>
</evidence>
<evidence type="ECO:0000256" key="3">
    <source>
        <dbReference type="SAM" id="MobiDB-lite"/>
    </source>
</evidence>
<evidence type="ECO:0000269" key="4">
    <source>
    </source>
</evidence>
<evidence type="ECO:0000269" key="5">
    <source>
    </source>
</evidence>
<evidence type="ECO:0000269" key="6">
    <source>
    </source>
</evidence>
<evidence type="ECO:0000269" key="7">
    <source>
    </source>
</evidence>
<evidence type="ECO:0000269" key="8">
    <source>
    </source>
</evidence>
<evidence type="ECO:0000269" key="9">
    <source>
    </source>
</evidence>
<evidence type="ECO:0000269" key="10">
    <source>
    </source>
</evidence>
<evidence type="ECO:0000269" key="11">
    <source>
    </source>
</evidence>
<evidence type="ECO:0000269" key="12">
    <source>
    </source>
</evidence>
<evidence type="ECO:0000269" key="13">
    <source>
    </source>
</evidence>
<evidence type="ECO:0000269" key="14">
    <source>
    </source>
</evidence>
<evidence type="ECO:0000269" key="15">
    <source>
    </source>
</evidence>
<evidence type="ECO:0000269" key="16">
    <source>
    </source>
</evidence>
<evidence type="ECO:0000269" key="17">
    <source>
    </source>
</evidence>
<evidence type="ECO:0000269" key="18">
    <source>
    </source>
</evidence>
<evidence type="ECO:0000269" key="19">
    <source>
    </source>
</evidence>
<evidence type="ECO:0000269" key="20">
    <source>
    </source>
</evidence>
<evidence type="ECO:0000305" key="21"/>
<evidence type="ECO:0007744" key="22">
    <source>
    </source>
</evidence>
<evidence type="ECO:0007744" key="23">
    <source>
    </source>
</evidence>
<evidence type="ECO:0007744" key="24">
    <source>
    </source>
</evidence>
<evidence type="ECO:0007744" key="25">
    <source>
    </source>
</evidence>
<evidence type="ECO:0007829" key="26">
    <source>
        <dbReference type="PDB" id="5SUP"/>
    </source>
</evidence>
<evidence type="ECO:0007829" key="27">
    <source>
        <dbReference type="PDB" id="7V2Y"/>
    </source>
</evidence>
<accession>Q07478</accession>
<accession>D6VRR5</accession>
<dbReference type="EC" id="3.6.4.13"/>
<dbReference type="EMBL" id="Z74132">
    <property type="protein sequence ID" value="CAA98650.1"/>
    <property type="molecule type" value="Genomic_DNA"/>
</dbReference>
<dbReference type="EMBL" id="AY692907">
    <property type="protein sequence ID" value="AAT92926.1"/>
    <property type="molecule type" value="Genomic_DNA"/>
</dbReference>
<dbReference type="EMBL" id="BK006938">
    <property type="protein sequence ID" value="DAA11775.1"/>
    <property type="molecule type" value="Genomic_DNA"/>
</dbReference>
<dbReference type="PIR" id="S67620">
    <property type="entry name" value="S67620"/>
</dbReference>
<dbReference type="RefSeq" id="NP_010199.1">
    <property type="nucleotide sequence ID" value="NM_001180143.1"/>
</dbReference>
<dbReference type="PDB" id="5SUP">
    <property type="method" value="X-ray"/>
    <property type="resolution" value="2.60 A"/>
    <property type="chains" value="A/B/C=61-446"/>
</dbReference>
<dbReference type="PDB" id="5SUQ">
    <property type="method" value="X-ray"/>
    <property type="resolution" value="6.00 A"/>
    <property type="chains" value="A/C=1-446"/>
</dbReference>
<dbReference type="PDB" id="7APX">
    <property type="method" value="EM"/>
    <property type="resolution" value="3.40 A"/>
    <property type="chains" value="F=48-446"/>
</dbReference>
<dbReference type="PDB" id="7AQO">
    <property type="method" value="EM"/>
    <property type="resolution" value="4.50 A"/>
    <property type="chains" value="F/L=51-446"/>
</dbReference>
<dbReference type="PDB" id="7LUV">
    <property type="method" value="EM"/>
    <property type="resolution" value="3.70 A"/>
    <property type="chains" value="M=1-446"/>
</dbReference>
<dbReference type="PDB" id="7V2Y">
    <property type="method" value="EM"/>
    <property type="resolution" value="3.40 A"/>
    <property type="chains" value="F=1-446"/>
</dbReference>
<dbReference type="PDB" id="8U8D">
    <property type="method" value="EM"/>
    <property type="resolution" value="3.04 A"/>
    <property type="chains" value="D=1-446"/>
</dbReference>
<dbReference type="PDB" id="8U8E">
    <property type="method" value="EM"/>
    <property type="resolution" value="3.33 A"/>
    <property type="chains" value="D=1-446"/>
</dbReference>
<dbReference type="PDBsum" id="5SUP"/>
<dbReference type="PDBsum" id="5SUQ"/>
<dbReference type="PDBsum" id="7APX"/>
<dbReference type="PDBsum" id="7AQO"/>
<dbReference type="PDBsum" id="7LUV"/>
<dbReference type="PDBsum" id="7V2Y"/>
<dbReference type="PDBsum" id="8U8D"/>
<dbReference type="PDBsum" id="8U8E"/>
<dbReference type="EMDB" id="EMD-11859"/>
<dbReference type="EMDB" id="EMD-23527"/>
<dbReference type="EMDB" id="EMD-31670"/>
<dbReference type="SMR" id="Q07478"/>
<dbReference type="BioGRID" id="31977">
    <property type="interactions" value="304"/>
</dbReference>
<dbReference type="ComplexPortal" id="CPX-1793">
    <property type="entry name" value="TREX complex"/>
</dbReference>
<dbReference type="DIP" id="DIP-5343N"/>
<dbReference type="FunCoup" id="Q07478">
    <property type="interactions" value="1545"/>
</dbReference>
<dbReference type="IntAct" id="Q07478">
    <property type="interactions" value="71"/>
</dbReference>
<dbReference type="MINT" id="Q07478"/>
<dbReference type="STRING" id="4932.YDL084W"/>
<dbReference type="TCDB" id="3.A.22.1.1">
    <property type="family name" value="the transcription-coupled trex/tap nuclear mrna export complex (trex) family"/>
</dbReference>
<dbReference type="iPTMnet" id="Q07478"/>
<dbReference type="PaxDb" id="4932-YDL084W"/>
<dbReference type="PeptideAtlas" id="Q07478"/>
<dbReference type="EnsemblFungi" id="YDL084W_mRNA">
    <property type="protein sequence ID" value="YDL084W"/>
    <property type="gene ID" value="YDL084W"/>
</dbReference>
<dbReference type="GeneID" id="851475"/>
<dbReference type="KEGG" id="sce:YDL084W"/>
<dbReference type="AGR" id="SGD:S000002242"/>
<dbReference type="SGD" id="S000002242">
    <property type="gene designation" value="SUB2"/>
</dbReference>
<dbReference type="VEuPathDB" id="FungiDB:YDL084W"/>
<dbReference type="eggNOG" id="KOG0329">
    <property type="taxonomic scope" value="Eukaryota"/>
</dbReference>
<dbReference type="GeneTree" id="ENSGT00960000189190"/>
<dbReference type="HOGENOM" id="CLU_003041_1_0_1"/>
<dbReference type="InParanoid" id="Q07478"/>
<dbReference type="OMA" id="YAHVEPK"/>
<dbReference type="OrthoDB" id="10265785at2759"/>
<dbReference type="BioCyc" id="YEAST:G3O-29493-MONOMER"/>
<dbReference type="BioGRID-ORCS" id="851475">
    <property type="hits" value="8 hits in 10 CRISPR screens"/>
</dbReference>
<dbReference type="PRO" id="PR:Q07478"/>
<dbReference type="Proteomes" id="UP000002311">
    <property type="component" value="Chromosome IV"/>
</dbReference>
<dbReference type="RNAct" id="Q07478">
    <property type="molecule type" value="protein"/>
</dbReference>
<dbReference type="GO" id="GO:0000781">
    <property type="term" value="C:chromosome, telomeric region"/>
    <property type="evidence" value="ECO:0000314"/>
    <property type="project" value="SGD"/>
</dbReference>
<dbReference type="GO" id="GO:0005737">
    <property type="term" value="C:cytoplasm"/>
    <property type="evidence" value="ECO:0007005"/>
    <property type="project" value="SGD"/>
</dbReference>
<dbReference type="GO" id="GO:0005634">
    <property type="term" value="C:nucleus"/>
    <property type="evidence" value="ECO:0007005"/>
    <property type="project" value="SGD"/>
</dbReference>
<dbReference type="GO" id="GO:0005681">
    <property type="term" value="C:spliceosomal complex"/>
    <property type="evidence" value="ECO:0007669"/>
    <property type="project" value="UniProtKB-KW"/>
</dbReference>
<dbReference type="GO" id="GO:0000346">
    <property type="term" value="C:transcription export complex"/>
    <property type="evidence" value="ECO:0000314"/>
    <property type="project" value="SGD"/>
</dbReference>
<dbReference type="GO" id="GO:0005524">
    <property type="term" value="F:ATP binding"/>
    <property type="evidence" value="ECO:0007669"/>
    <property type="project" value="UniProtKB-KW"/>
</dbReference>
<dbReference type="GO" id="GO:0016887">
    <property type="term" value="F:ATP hydrolysis activity"/>
    <property type="evidence" value="ECO:0007669"/>
    <property type="project" value="RHEA"/>
</dbReference>
<dbReference type="GO" id="GO:0003729">
    <property type="term" value="F:mRNA binding"/>
    <property type="evidence" value="ECO:0000318"/>
    <property type="project" value="GO_Central"/>
</dbReference>
<dbReference type="GO" id="GO:0003723">
    <property type="term" value="F:RNA binding"/>
    <property type="evidence" value="ECO:0000314"/>
    <property type="project" value="SGD"/>
</dbReference>
<dbReference type="GO" id="GO:0003724">
    <property type="term" value="F:RNA helicase activity"/>
    <property type="evidence" value="ECO:0000316"/>
    <property type="project" value="SGD"/>
</dbReference>
<dbReference type="GO" id="GO:0031124">
    <property type="term" value="P:mRNA 3'-end processing"/>
    <property type="evidence" value="ECO:0000315"/>
    <property type="project" value="SGD"/>
</dbReference>
<dbReference type="GO" id="GO:0006406">
    <property type="term" value="P:mRNA export from nucleus"/>
    <property type="evidence" value="ECO:0000314"/>
    <property type="project" value="SGD"/>
</dbReference>
<dbReference type="GO" id="GO:0000398">
    <property type="term" value="P:mRNA splicing, via spliceosome"/>
    <property type="evidence" value="ECO:0000315"/>
    <property type="project" value="SGD"/>
</dbReference>
<dbReference type="GO" id="GO:0031509">
    <property type="term" value="P:subtelomeric heterochromatin formation"/>
    <property type="evidence" value="ECO:0000315"/>
    <property type="project" value="SGD"/>
</dbReference>
<dbReference type="GO" id="GO:0006368">
    <property type="term" value="P:transcription elongation by RNA polymerase II"/>
    <property type="evidence" value="ECO:0000315"/>
    <property type="project" value="SGD"/>
</dbReference>
<dbReference type="GO" id="GO:0006283">
    <property type="term" value="P:transcription-coupled nucleotide-excision repair"/>
    <property type="evidence" value="ECO:0000315"/>
    <property type="project" value="SGD"/>
</dbReference>
<dbReference type="CDD" id="cd17950">
    <property type="entry name" value="DEADc_DDX39"/>
    <property type="match status" value="1"/>
</dbReference>
<dbReference type="CDD" id="cd18787">
    <property type="entry name" value="SF2_C_DEAD"/>
    <property type="match status" value="1"/>
</dbReference>
<dbReference type="FunFam" id="3.40.50.300:FF:000809">
    <property type="entry name" value="ATP-dependent RNA helicase SUB2"/>
    <property type="match status" value="1"/>
</dbReference>
<dbReference type="FunFam" id="3.40.50.300:FF:000111">
    <property type="entry name" value="DEAD-box ATP-dependent RNA helicase"/>
    <property type="match status" value="1"/>
</dbReference>
<dbReference type="Gene3D" id="3.40.50.300">
    <property type="entry name" value="P-loop containing nucleotide triphosphate hydrolases"/>
    <property type="match status" value="2"/>
</dbReference>
<dbReference type="InterPro" id="IPR011545">
    <property type="entry name" value="DEAD/DEAH_box_helicase_dom"/>
</dbReference>
<dbReference type="InterPro" id="IPR014001">
    <property type="entry name" value="Helicase_ATP-bd"/>
</dbReference>
<dbReference type="InterPro" id="IPR001650">
    <property type="entry name" value="Helicase_C-like"/>
</dbReference>
<dbReference type="InterPro" id="IPR027417">
    <property type="entry name" value="P-loop_NTPase"/>
</dbReference>
<dbReference type="InterPro" id="IPR014014">
    <property type="entry name" value="RNA_helicase_DEAD_Q_motif"/>
</dbReference>
<dbReference type="PANTHER" id="PTHR47958">
    <property type="entry name" value="ATP-DEPENDENT RNA HELICASE DBP3"/>
    <property type="match status" value="1"/>
</dbReference>
<dbReference type="Pfam" id="PF00270">
    <property type="entry name" value="DEAD"/>
    <property type="match status" value="1"/>
</dbReference>
<dbReference type="Pfam" id="PF00271">
    <property type="entry name" value="Helicase_C"/>
    <property type="match status" value="1"/>
</dbReference>
<dbReference type="SMART" id="SM00487">
    <property type="entry name" value="DEXDc"/>
    <property type="match status" value="1"/>
</dbReference>
<dbReference type="SMART" id="SM00490">
    <property type="entry name" value="HELICc"/>
    <property type="match status" value="1"/>
</dbReference>
<dbReference type="SUPFAM" id="SSF52540">
    <property type="entry name" value="P-loop containing nucleoside triphosphate hydrolases"/>
    <property type="match status" value="1"/>
</dbReference>
<dbReference type="PROSITE" id="PS51192">
    <property type="entry name" value="HELICASE_ATP_BIND_1"/>
    <property type="match status" value="1"/>
</dbReference>
<dbReference type="PROSITE" id="PS51194">
    <property type="entry name" value="HELICASE_CTER"/>
    <property type="match status" value="1"/>
</dbReference>
<dbReference type="PROSITE" id="PS51195">
    <property type="entry name" value="Q_MOTIF"/>
    <property type="match status" value="1"/>
</dbReference>
<name>SUB2_YEAST</name>
<comment type="function">
    <text evidence="4 5 6 7 8 9 10 11 12 13 15 16 19 20">ATP-binding RNA helicase component of the TREX complex involved in transcription elongation and required for the export of mRNA out of the nucleus. SUB2 also plays a role in pre-mRNA splicing and spliceosome assembly. May be involved in rDNA and telomeric silencing, and maintenance of genome integrity. Associates with THO1, which facilitates RNA binding of SUB2 and likely plays a role in mRNA export (PubMed:37578863).</text>
</comment>
<comment type="catalytic activity">
    <reaction>
        <text>ATP + H2O = ADP + phosphate + H(+)</text>
        <dbReference type="Rhea" id="RHEA:13065"/>
        <dbReference type="ChEBI" id="CHEBI:15377"/>
        <dbReference type="ChEBI" id="CHEBI:15378"/>
        <dbReference type="ChEBI" id="CHEBI:30616"/>
        <dbReference type="ChEBI" id="CHEBI:43474"/>
        <dbReference type="ChEBI" id="CHEBI:456216"/>
        <dbReference type="EC" id="3.6.4.13"/>
    </reaction>
</comment>
<comment type="subunit">
    <text evidence="9 11 14 15 20">Component of the TREX complex composed of at least SUB2, TEX1, YRA1 and the four THO complex components: HPR1, MFT1, THO2 and THP1. Interacts with HPR1, YRA1, and YRA2. SUB2 may mediate the interaction between the THO complex and YRA1. Associates with growing mRNP complexes during transcription. This association requires the presence of HPR1. Also interacts with SAC3. Interacts with THO1 in the presence of RNA; this interaction facilitates RNA binding of SUB2 (PubMed:37578863).</text>
</comment>
<comment type="interaction">
    <interactant intactId="EBI-18500">
        <id>Q07478</id>
    </interactant>
    <interactant intactId="EBI-29516">
        <id>Q12159</id>
        <label>YRA1</label>
    </interactant>
    <organismsDiffer>false</organismsDiffer>
    <experiments>5</experiments>
</comment>
<comment type="subcellular location">
    <subcellularLocation>
        <location evidence="17">Nucleus</location>
    </subcellularLocation>
</comment>
<comment type="domain">
    <text>The Q motif is unique to and characteristic of the DEAD box family of RNA helicases and controls ATP binding and hydrolysis.</text>
</comment>
<comment type="miscellaneous">
    <text evidence="18">Present with 51700 molecules/cell in log phase SD medium.</text>
</comment>
<comment type="similarity">
    <text evidence="21">Belongs to the DEAD box helicase family. DECD subfamily.</text>
</comment>
<feature type="initiator methionine" description="Removed" evidence="22">
    <location>
        <position position="1"/>
    </location>
</feature>
<feature type="chain" id="PRO_0000055082" description="ATP-dependent RNA helicase SUB2">
    <location>
        <begin position="2"/>
        <end position="446"/>
    </location>
</feature>
<feature type="domain" description="Helicase ATP-binding" evidence="1">
    <location>
        <begin position="93"/>
        <end position="268"/>
    </location>
</feature>
<feature type="domain" description="Helicase C-terminal" evidence="2">
    <location>
        <begin position="280"/>
        <end position="441"/>
    </location>
</feature>
<feature type="region of interest" description="Disordered" evidence="3">
    <location>
        <begin position="23"/>
        <end position="52"/>
    </location>
</feature>
<feature type="short sequence motif" description="Q motif">
    <location>
        <begin position="62"/>
        <end position="90"/>
    </location>
</feature>
<feature type="short sequence motif" description="DECD box">
    <location>
        <begin position="215"/>
        <end position="218"/>
    </location>
</feature>
<feature type="compositionally biased region" description="Low complexity" evidence="3">
    <location>
        <begin position="23"/>
        <end position="41"/>
    </location>
</feature>
<feature type="binding site">
    <location>
        <begin position="106"/>
        <end position="113"/>
    </location>
    <ligand>
        <name>ATP</name>
        <dbReference type="ChEBI" id="CHEBI:30616"/>
    </ligand>
</feature>
<feature type="modified residue" description="N-acetylserine" evidence="22">
    <location>
        <position position="2"/>
    </location>
</feature>
<feature type="modified residue" description="Phosphoserine" evidence="23">
    <location>
        <position position="13"/>
    </location>
</feature>
<feature type="modified residue" description="Phosphoserine" evidence="25">
    <location>
        <position position="37"/>
    </location>
</feature>
<feature type="modified residue" description="Phosphothreonine" evidence="24">
    <location>
        <position position="169"/>
    </location>
</feature>
<feature type="mutagenesis site" description="No growth at 37 degrees Celsius; when associated with DEL-135." evidence="6">
    <original>D</original>
    <variation>G</variation>
    <location>
        <position position="8"/>
    </location>
</feature>
<feature type="mutagenesis site" description="In SUB2-1; no growth at 16 and 37 degrees Celsius; when associated with G-83; M-142 and T-146." evidence="7">
    <original>D</original>
    <variation>G</variation>
    <location>
        <position position="22"/>
    </location>
</feature>
<feature type="mutagenesis site" description="In SUB2-1; no growth at 16 and 37 degrees Celsius; when associated with G-22; M-142 and T-146." evidence="7">
    <original>E</original>
    <variation>G</variation>
    <location>
        <position position="83"/>
    </location>
</feature>
<feature type="mutagenesis site" description="Lethal." evidence="5">
    <original>K</original>
    <variation>N</variation>
    <location>
        <position position="112"/>
    </location>
</feature>
<feature type="mutagenesis site" description="In SUB2-201; no growth at 37 degrees Celsius; when associated with G-173 and F-403." evidence="6">
    <original>Q</original>
    <variation>R</variation>
    <location>
        <position position="122"/>
    </location>
</feature>
<feature type="mutagenesis site" description="No growth at 37 degrees Celsius; when associated with G-8." evidence="6">
    <location>
        <position position="135"/>
    </location>
</feature>
<feature type="mutagenesis site" description="In SUB2-1; no growth at 16 and 37 degrees Celsius; when associated with G-22; G-83 and T-146." evidence="7">
    <original>L</original>
    <variation>M</variation>
    <location>
        <position position="142"/>
    </location>
</feature>
<feature type="mutagenesis site" description="In SUB2-1; no growth at 16 and 37 degrees Celsius; when associated with G-22; G-83 and M-142." evidence="7">
    <original>I</original>
    <variation>T</variation>
    <location>
        <position position="146"/>
    </location>
</feature>
<feature type="mutagenesis site" description="In SUB2-201; no growth at 37 degrees Celsius; when associated with R-122 and F-403." evidence="6">
    <original>K</original>
    <variation>G</variation>
    <location>
        <position position="173"/>
    </location>
</feature>
<feature type="mutagenesis site" description="In SUB2-100; no growth at 37 degrees Celsius." evidence="5">
    <original>D</original>
    <variation>G</variation>
    <location>
        <position position="174"/>
    </location>
</feature>
<feature type="mutagenesis site" description="Lethal." evidence="5">
    <original>D</original>
    <variation>E</variation>
    <location>
        <position position="215"/>
    </location>
</feature>
<feature type="mutagenesis site" description="Lethal." evidence="5">
    <original>C</original>
    <variation>A</variation>
    <location>
        <position position="217"/>
    </location>
</feature>
<feature type="mutagenesis site" description="Lethal." evidence="5">
    <original>S</original>
    <variation>L</variation>
    <location>
        <position position="247"/>
    </location>
</feature>
<feature type="mutagenesis site" description="In SUB2-5; no growth at 16 degrees Celsius." evidence="7">
    <original>Q</original>
    <variation>R</variation>
    <location>
        <position position="308"/>
    </location>
</feature>
<feature type="mutagenesis site" description="In SUB2-201; no growth at 37 degrees Celsius; when associated with R-122 and G-173." evidence="6">
    <original>K</original>
    <variation>F</variation>
    <location>
        <position position="403"/>
    </location>
</feature>
<feature type="helix" evidence="26">
    <location>
        <begin position="63"/>
        <end position="67"/>
    </location>
</feature>
<feature type="helix" evidence="26">
    <location>
        <begin position="71"/>
        <end position="79"/>
    </location>
</feature>
<feature type="helix" evidence="26">
    <location>
        <begin position="87"/>
        <end position="96"/>
    </location>
</feature>
<feature type="turn" evidence="26">
    <location>
        <begin position="97"/>
        <end position="99"/>
    </location>
</feature>
<feature type="strand" evidence="26">
    <location>
        <begin position="102"/>
        <end position="105"/>
    </location>
</feature>
<feature type="strand" evidence="26">
    <location>
        <begin position="110"/>
        <end position="112"/>
    </location>
</feature>
<feature type="helix" evidence="26">
    <location>
        <begin position="113"/>
        <end position="123"/>
    </location>
</feature>
<feature type="strand" evidence="26">
    <location>
        <begin position="133"/>
        <end position="136"/>
    </location>
</feature>
<feature type="helix" evidence="26">
    <location>
        <begin position="140"/>
        <end position="153"/>
    </location>
</feature>
<feature type="turn" evidence="26">
    <location>
        <begin position="154"/>
        <end position="156"/>
    </location>
</feature>
<feature type="strand" evidence="26">
    <location>
        <begin position="162"/>
        <end position="165"/>
    </location>
</feature>
<feature type="helix" evidence="26">
    <location>
        <begin position="171"/>
        <end position="179"/>
    </location>
</feature>
<feature type="turn" evidence="26">
    <location>
        <begin position="181"/>
        <end position="183"/>
    </location>
</feature>
<feature type="strand" evidence="26">
    <location>
        <begin position="186"/>
        <end position="190"/>
    </location>
</feature>
<feature type="helix" evidence="26">
    <location>
        <begin position="192"/>
        <end position="199"/>
    </location>
</feature>
<feature type="turn" evidence="26">
    <location>
        <begin position="200"/>
        <end position="202"/>
    </location>
</feature>
<feature type="strand" evidence="26">
    <location>
        <begin position="211"/>
        <end position="215"/>
    </location>
</feature>
<feature type="helix" evidence="26">
    <location>
        <begin position="217"/>
        <end position="222"/>
    </location>
</feature>
<feature type="helix" evidence="26">
    <location>
        <begin position="224"/>
        <end position="234"/>
    </location>
</feature>
<feature type="strand" evidence="26">
    <location>
        <begin position="239"/>
        <end position="248"/>
    </location>
</feature>
<feature type="turn" evidence="26">
    <location>
        <begin position="252"/>
        <end position="254"/>
    </location>
</feature>
<feature type="helix" evidence="26">
    <location>
        <begin position="255"/>
        <end position="259"/>
    </location>
</feature>
<feature type="strand" evidence="26">
    <location>
        <begin position="266"/>
        <end position="268"/>
    </location>
</feature>
<feature type="helix" evidence="26">
    <location>
        <begin position="273"/>
        <end position="276"/>
    </location>
</feature>
<feature type="strand" evidence="26">
    <location>
        <begin position="281"/>
        <end position="287"/>
    </location>
</feature>
<feature type="helix" evidence="26">
    <location>
        <begin position="290"/>
        <end position="292"/>
    </location>
</feature>
<feature type="helix" evidence="26">
    <location>
        <begin position="293"/>
        <end position="303"/>
    </location>
</feature>
<feature type="strand" evidence="26">
    <location>
        <begin position="307"/>
        <end position="312"/>
    </location>
</feature>
<feature type="helix" evidence="26">
    <location>
        <begin position="316"/>
        <end position="328"/>
    </location>
</feature>
<feature type="strand" evidence="26">
    <location>
        <begin position="333"/>
        <end position="336"/>
    </location>
</feature>
<feature type="strand" evidence="26">
    <location>
        <begin position="338"/>
        <end position="340"/>
    </location>
</feature>
<feature type="helix" evidence="26">
    <location>
        <begin position="342"/>
        <end position="353"/>
    </location>
</feature>
<feature type="strand" evidence="26">
    <location>
        <begin position="358"/>
        <end position="362"/>
    </location>
</feature>
<feature type="helix" evidence="26">
    <location>
        <begin position="364"/>
        <end position="366"/>
    </location>
</feature>
<feature type="strand" evidence="26">
    <location>
        <begin position="367"/>
        <end position="369"/>
    </location>
</feature>
<feature type="strand" evidence="26">
    <location>
        <begin position="375"/>
        <end position="382"/>
    </location>
</feature>
<feature type="helix" evidence="26">
    <location>
        <begin position="387"/>
        <end position="394"/>
    </location>
</feature>
<feature type="strand" evidence="27">
    <location>
        <begin position="396"/>
        <end position="398"/>
    </location>
</feature>
<feature type="helix" evidence="26">
    <location>
        <begin position="399"/>
        <end position="401"/>
    </location>
</feature>
<feature type="strand" evidence="26">
    <location>
        <begin position="404"/>
        <end position="410"/>
    </location>
</feature>
<feature type="helix" evidence="26">
    <location>
        <begin position="413"/>
        <end position="426"/>
    </location>
</feature>
<feature type="helix" evidence="26">
    <location>
        <begin position="441"/>
        <end position="443"/>
    </location>
</feature>
<organism>
    <name type="scientific">Saccharomyces cerevisiae (strain ATCC 204508 / S288c)</name>
    <name type="common">Baker's yeast</name>
    <dbReference type="NCBI Taxonomy" id="559292"/>
    <lineage>
        <taxon>Eukaryota</taxon>
        <taxon>Fungi</taxon>
        <taxon>Dikarya</taxon>
        <taxon>Ascomycota</taxon>
        <taxon>Saccharomycotina</taxon>
        <taxon>Saccharomycetes</taxon>
        <taxon>Saccharomycetales</taxon>
        <taxon>Saccharomycetaceae</taxon>
        <taxon>Saccharomyces</taxon>
    </lineage>
</organism>
<sequence>MSHEGEEDLLEYSDNEQEIQIDASKAAEAGETGAATSATEGDNNNNTAAGDKKGSYVGIHSTGFKDFLLKPELSRAIIDCGFEHPSEVQQHTIPQSIHGTDVLCQAKSGLGKTAVFVLSTLQQLDPVPGEVAVVVICNARELAYQIRNEYLRFSKYMPDVKTAVFYGGTPISKDAELLKNKDTAPHIVVATPGRLKALVREKYIDLSHVKNFVIDECDKVLEELDMRRDVQEIFRATPRDKQVMMFSATLSQEIRPICRRFLQNPLEIFVDDEAKLTLHGLQQYYIKLEEREKNRKLAQLLDDLEFNQVIIFVKSTTRANELTKLLNASNFPAITVHGHMKQEERIARYKAFKDFEKRICVSTDVFGRGIDIERINLAINYDLTNEADQYLHRVGRAGRFGTKGLAISFVSSKEDEEVLAKIQERFDVKIAEFPEEGIDPSTYLNN</sequence>